<protein>
    <recommendedName>
        <fullName evidence="1">Glyoxylate/hydroxypyruvate reductase B</fullName>
        <ecNumber evidence="1">1.1.1.79</ecNumber>
        <ecNumber evidence="1">1.1.1.81</ecNumber>
    </recommendedName>
</protein>
<reference key="1">
    <citation type="journal article" date="2009" name="PLoS Genet.">
        <title>Organised genome dynamics in the Escherichia coli species results in highly diverse adaptive paths.</title>
        <authorList>
            <person name="Touchon M."/>
            <person name="Hoede C."/>
            <person name="Tenaillon O."/>
            <person name="Barbe V."/>
            <person name="Baeriswyl S."/>
            <person name="Bidet P."/>
            <person name="Bingen E."/>
            <person name="Bonacorsi S."/>
            <person name="Bouchier C."/>
            <person name="Bouvet O."/>
            <person name="Calteau A."/>
            <person name="Chiapello H."/>
            <person name="Clermont O."/>
            <person name="Cruveiller S."/>
            <person name="Danchin A."/>
            <person name="Diard M."/>
            <person name="Dossat C."/>
            <person name="Karoui M.E."/>
            <person name="Frapy E."/>
            <person name="Garry L."/>
            <person name="Ghigo J.M."/>
            <person name="Gilles A.M."/>
            <person name="Johnson J."/>
            <person name="Le Bouguenec C."/>
            <person name="Lescat M."/>
            <person name="Mangenot S."/>
            <person name="Martinez-Jehanne V."/>
            <person name="Matic I."/>
            <person name="Nassif X."/>
            <person name="Oztas S."/>
            <person name="Petit M.A."/>
            <person name="Pichon C."/>
            <person name="Rouy Z."/>
            <person name="Ruf C.S."/>
            <person name="Schneider D."/>
            <person name="Tourret J."/>
            <person name="Vacherie B."/>
            <person name="Vallenet D."/>
            <person name="Medigue C."/>
            <person name="Rocha E.P.C."/>
            <person name="Denamur E."/>
        </authorList>
    </citation>
    <scope>NUCLEOTIDE SEQUENCE [LARGE SCALE GENOMIC DNA]</scope>
    <source>
        <strain>ATCC 35469 / DSM 13698 / BCRC 15582 / CCUG 18766 / IAM 14443 / JCM 21226 / LMG 7866 / NBRC 102419 / NCTC 12128 / CDC 0568-73</strain>
    </source>
</reference>
<comment type="function">
    <text evidence="1">Catalyzes the NADPH-dependent reduction of glyoxylate and hydroxypyruvate into glycolate and glycerate, respectively.</text>
</comment>
<comment type="catalytic activity">
    <reaction evidence="1">
        <text>glycolate + NADP(+) = glyoxylate + NADPH + H(+)</text>
        <dbReference type="Rhea" id="RHEA:10992"/>
        <dbReference type="ChEBI" id="CHEBI:15378"/>
        <dbReference type="ChEBI" id="CHEBI:29805"/>
        <dbReference type="ChEBI" id="CHEBI:36655"/>
        <dbReference type="ChEBI" id="CHEBI:57783"/>
        <dbReference type="ChEBI" id="CHEBI:58349"/>
        <dbReference type="EC" id="1.1.1.79"/>
    </reaction>
</comment>
<comment type="catalytic activity">
    <reaction evidence="1">
        <text>(R)-glycerate + NAD(+) = 3-hydroxypyruvate + NADH + H(+)</text>
        <dbReference type="Rhea" id="RHEA:17905"/>
        <dbReference type="ChEBI" id="CHEBI:15378"/>
        <dbReference type="ChEBI" id="CHEBI:16659"/>
        <dbReference type="ChEBI" id="CHEBI:17180"/>
        <dbReference type="ChEBI" id="CHEBI:57540"/>
        <dbReference type="ChEBI" id="CHEBI:57945"/>
        <dbReference type="EC" id="1.1.1.81"/>
    </reaction>
</comment>
<comment type="catalytic activity">
    <reaction evidence="1">
        <text>(R)-glycerate + NADP(+) = 3-hydroxypyruvate + NADPH + H(+)</text>
        <dbReference type="Rhea" id="RHEA:18657"/>
        <dbReference type="ChEBI" id="CHEBI:15378"/>
        <dbReference type="ChEBI" id="CHEBI:16659"/>
        <dbReference type="ChEBI" id="CHEBI:17180"/>
        <dbReference type="ChEBI" id="CHEBI:57783"/>
        <dbReference type="ChEBI" id="CHEBI:58349"/>
        <dbReference type="EC" id="1.1.1.81"/>
    </reaction>
</comment>
<comment type="subunit">
    <text evidence="1">Homodimer.</text>
</comment>
<comment type="subcellular location">
    <subcellularLocation>
        <location evidence="1">Cytoplasm</location>
    </subcellularLocation>
</comment>
<comment type="similarity">
    <text evidence="1">Belongs to the D-isomer specific 2-hydroxyacid dehydrogenase family. GhrB subfamily.</text>
</comment>
<evidence type="ECO:0000255" key="1">
    <source>
        <dbReference type="HAMAP-Rule" id="MF_01667"/>
    </source>
</evidence>
<dbReference type="EC" id="1.1.1.79" evidence="1"/>
<dbReference type="EC" id="1.1.1.81" evidence="1"/>
<dbReference type="EMBL" id="CU928158">
    <property type="protein sequence ID" value="CAQ91026.1"/>
    <property type="molecule type" value="Genomic_DNA"/>
</dbReference>
<dbReference type="RefSeq" id="WP_000804667.1">
    <property type="nucleotide sequence ID" value="NC_011740.1"/>
</dbReference>
<dbReference type="SMR" id="B7LTG7"/>
<dbReference type="GeneID" id="75059842"/>
<dbReference type="KEGG" id="efe:EFER_3554"/>
<dbReference type="HOGENOM" id="CLU_019796_1_2_6"/>
<dbReference type="OrthoDB" id="9805416at2"/>
<dbReference type="Proteomes" id="UP000000745">
    <property type="component" value="Chromosome"/>
</dbReference>
<dbReference type="GO" id="GO:0005829">
    <property type="term" value="C:cytosol"/>
    <property type="evidence" value="ECO:0007669"/>
    <property type="project" value="TreeGrafter"/>
</dbReference>
<dbReference type="GO" id="GO:0005886">
    <property type="term" value="C:plasma membrane"/>
    <property type="evidence" value="ECO:0007669"/>
    <property type="project" value="UniProtKB-UniRule"/>
</dbReference>
<dbReference type="GO" id="GO:0030267">
    <property type="term" value="F:glyoxylate reductase (NADPH) activity"/>
    <property type="evidence" value="ECO:0007669"/>
    <property type="project" value="UniProtKB-UniRule"/>
</dbReference>
<dbReference type="GO" id="GO:0008465">
    <property type="term" value="F:hydroxypyruvate reductase (NADH) activity"/>
    <property type="evidence" value="ECO:0007669"/>
    <property type="project" value="RHEA"/>
</dbReference>
<dbReference type="GO" id="GO:0120509">
    <property type="term" value="F:hydroxypyruvate reductase (NADPH) activity"/>
    <property type="evidence" value="ECO:0007669"/>
    <property type="project" value="RHEA"/>
</dbReference>
<dbReference type="GO" id="GO:0051287">
    <property type="term" value="F:NAD binding"/>
    <property type="evidence" value="ECO:0007669"/>
    <property type="project" value="InterPro"/>
</dbReference>
<dbReference type="CDD" id="cd05301">
    <property type="entry name" value="GDH"/>
    <property type="match status" value="1"/>
</dbReference>
<dbReference type="FunFam" id="3.40.50.720:FF:000026">
    <property type="entry name" value="Glyoxylate/hydroxypyruvate reductase B"/>
    <property type="match status" value="1"/>
</dbReference>
<dbReference type="Gene3D" id="3.40.50.720">
    <property type="entry name" value="NAD(P)-binding Rossmann-like Domain"/>
    <property type="match status" value="2"/>
</dbReference>
<dbReference type="HAMAP" id="MF_01667">
    <property type="entry name" value="2_Hacid_dh_C_GhrB"/>
    <property type="match status" value="1"/>
</dbReference>
<dbReference type="InterPro" id="IPR050223">
    <property type="entry name" value="D-isomer_2-hydroxyacid_DH"/>
</dbReference>
<dbReference type="InterPro" id="IPR006139">
    <property type="entry name" value="D-isomer_2_OHA_DH_cat_dom"/>
</dbReference>
<dbReference type="InterPro" id="IPR029753">
    <property type="entry name" value="D-isomer_DH_CS"/>
</dbReference>
<dbReference type="InterPro" id="IPR006140">
    <property type="entry name" value="D-isomer_DH_NAD-bd"/>
</dbReference>
<dbReference type="InterPro" id="IPR023756">
    <property type="entry name" value="Glyo/OHPyrv_Rdtase_B"/>
</dbReference>
<dbReference type="InterPro" id="IPR036291">
    <property type="entry name" value="NAD(P)-bd_dom_sf"/>
</dbReference>
<dbReference type="NCBIfam" id="NF011938">
    <property type="entry name" value="PRK15409.1"/>
    <property type="match status" value="1"/>
</dbReference>
<dbReference type="PANTHER" id="PTHR10996">
    <property type="entry name" value="2-HYDROXYACID DEHYDROGENASE-RELATED"/>
    <property type="match status" value="1"/>
</dbReference>
<dbReference type="PANTHER" id="PTHR10996:SF283">
    <property type="entry name" value="GLYOXYLATE_HYDROXYPYRUVATE REDUCTASE B"/>
    <property type="match status" value="1"/>
</dbReference>
<dbReference type="Pfam" id="PF00389">
    <property type="entry name" value="2-Hacid_dh"/>
    <property type="match status" value="1"/>
</dbReference>
<dbReference type="Pfam" id="PF02826">
    <property type="entry name" value="2-Hacid_dh_C"/>
    <property type="match status" value="1"/>
</dbReference>
<dbReference type="SUPFAM" id="SSF52283">
    <property type="entry name" value="Formate/glycerate dehydrogenase catalytic domain-like"/>
    <property type="match status" value="1"/>
</dbReference>
<dbReference type="SUPFAM" id="SSF51735">
    <property type="entry name" value="NAD(P)-binding Rossmann-fold domains"/>
    <property type="match status" value="1"/>
</dbReference>
<dbReference type="PROSITE" id="PS00670">
    <property type="entry name" value="D_2_HYDROXYACID_DH_2"/>
    <property type="match status" value="1"/>
</dbReference>
<dbReference type="PROSITE" id="PS00671">
    <property type="entry name" value="D_2_HYDROXYACID_DH_3"/>
    <property type="match status" value="1"/>
</dbReference>
<feature type="chain" id="PRO_1000187292" description="Glyoxylate/hydroxypyruvate reductase B">
    <location>
        <begin position="1"/>
        <end position="324"/>
    </location>
</feature>
<feature type="active site" evidence="1">
    <location>
        <position position="237"/>
    </location>
</feature>
<feature type="active site" evidence="1">
    <location>
        <position position="266"/>
    </location>
</feature>
<feature type="active site" description="Proton donor" evidence="1">
    <location>
        <position position="285"/>
    </location>
</feature>
<keyword id="KW-0963">Cytoplasm</keyword>
<keyword id="KW-0520">NAD</keyword>
<keyword id="KW-0521">NADP</keyword>
<keyword id="KW-0560">Oxidoreductase</keyword>
<accession>B7LTG7</accession>
<name>GHRB_ESCF3</name>
<sequence length="324" mass="35509">MKPSIILYKKLPDVLLQRLEEHFTVTQVSNLSPQTVEQHAEAFANAEGLLGSSEKVDDALLEKMPKLRATSTISVGYDNFDVDALNARKVLLMHTPTVLTETVADTLMALILATSRRVVEVAERVKAGEWTASIGPDWFGSDVHHKTLGIVGMGRIGMALAQRAHFGFNMPILYNARRQHPQAEERFNARYCDLDTLLQEADFVCLILPLTEETHHLFGAEQFAKMKSSAIFINAGRGPVVDEKALISALQKGEIHAAGLDVFEREPLPVDSPLLAMPNVVALPHIGSATHETRYNMAACAVDNLIAALQGNVDKNCVNPQVAK</sequence>
<gene>
    <name evidence="1" type="primary">ghrB</name>
    <name type="ordered locus">EFER_3554</name>
</gene>
<proteinExistence type="inferred from homology"/>
<organism>
    <name type="scientific">Escherichia fergusonii (strain ATCC 35469 / DSM 13698 / CCUG 18766 / IAM 14443 / JCM 21226 / LMG 7866 / NBRC 102419 / NCTC 12128 / CDC 0568-73)</name>
    <dbReference type="NCBI Taxonomy" id="585054"/>
    <lineage>
        <taxon>Bacteria</taxon>
        <taxon>Pseudomonadati</taxon>
        <taxon>Pseudomonadota</taxon>
        <taxon>Gammaproteobacteria</taxon>
        <taxon>Enterobacterales</taxon>
        <taxon>Enterobacteriaceae</taxon>
        <taxon>Escherichia</taxon>
    </lineage>
</organism>